<sequence>AQPTDQQMDARSFLSEEMIAEFKAAFDMFDTDGGGDISTKELGTVMRMLGQTPTKEELDAIIEEVDEDGSGTIDFEEFLVMMVRQMKEDAQGKSEEELAECFRIFDKNADGYIDSEELGEILRSSGESITDEEIEELMKDGDKNNDGKIDFDEFLKMMEGVQ</sequence>
<protein>
    <recommendedName>
        <fullName>Troponin C, skeletal muscle</fullName>
    </recommendedName>
</protein>
<name>TNNC2_PELLE</name>
<reference key="1">
    <citation type="journal article" date="1978" name="Eur. J. Biochem.">
        <title>The amino-acid sequence of troponin C from frog skeletal muscle.</title>
        <authorList>
            <person name="van Eerd J.-P."/>
            <person name="Capony J.-P."/>
            <person name="Ferraz C."/>
            <person name="Pechere J.-F."/>
        </authorList>
    </citation>
    <scope>PROTEIN SEQUENCE</scope>
    <scope>ACETYLATION AT ALA-1</scope>
</reference>
<dbReference type="PIR" id="A03016">
    <property type="entry name" value="TPFGCS"/>
</dbReference>
<dbReference type="SMR" id="P02589"/>
<dbReference type="iPTMnet" id="P02589"/>
<dbReference type="GO" id="GO:0016460">
    <property type="term" value="C:myosin II complex"/>
    <property type="evidence" value="ECO:0007669"/>
    <property type="project" value="TreeGrafter"/>
</dbReference>
<dbReference type="GO" id="GO:0005509">
    <property type="term" value="F:calcium ion binding"/>
    <property type="evidence" value="ECO:0007669"/>
    <property type="project" value="InterPro"/>
</dbReference>
<dbReference type="FunFam" id="1.10.238.10:FF:000107">
    <property type="entry name" value="Troponin C, skeletal muscle"/>
    <property type="match status" value="1"/>
</dbReference>
<dbReference type="Gene3D" id="1.10.238.10">
    <property type="entry name" value="EF-hand"/>
    <property type="match status" value="2"/>
</dbReference>
<dbReference type="InterPro" id="IPR050230">
    <property type="entry name" value="CALM/Myosin/TropC-like"/>
</dbReference>
<dbReference type="InterPro" id="IPR011992">
    <property type="entry name" value="EF-hand-dom_pair"/>
</dbReference>
<dbReference type="InterPro" id="IPR018247">
    <property type="entry name" value="EF_Hand_1_Ca_BS"/>
</dbReference>
<dbReference type="InterPro" id="IPR002048">
    <property type="entry name" value="EF_hand_dom"/>
</dbReference>
<dbReference type="PANTHER" id="PTHR23048">
    <property type="entry name" value="MYOSIN LIGHT CHAIN 1, 3"/>
    <property type="match status" value="1"/>
</dbReference>
<dbReference type="PANTHER" id="PTHR23048:SF57">
    <property type="entry name" value="TROPONIN C2, FAST SKELETAL TYPE"/>
    <property type="match status" value="1"/>
</dbReference>
<dbReference type="Pfam" id="PF13499">
    <property type="entry name" value="EF-hand_7"/>
    <property type="match status" value="2"/>
</dbReference>
<dbReference type="SMART" id="SM00054">
    <property type="entry name" value="EFh"/>
    <property type="match status" value="4"/>
</dbReference>
<dbReference type="SUPFAM" id="SSF47473">
    <property type="entry name" value="EF-hand"/>
    <property type="match status" value="1"/>
</dbReference>
<dbReference type="PROSITE" id="PS00018">
    <property type="entry name" value="EF_HAND_1"/>
    <property type="match status" value="4"/>
</dbReference>
<dbReference type="PROSITE" id="PS50222">
    <property type="entry name" value="EF_HAND_2"/>
    <property type="match status" value="4"/>
</dbReference>
<accession>P02589</accession>
<keyword id="KW-0007">Acetylation</keyword>
<keyword id="KW-0106">Calcium</keyword>
<keyword id="KW-0903">Direct protein sequencing</keyword>
<keyword id="KW-0479">Metal-binding</keyword>
<keyword id="KW-0514">Muscle protein</keyword>
<keyword id="KW-0677">Repeat</keyword>
<evidence type="ECO:0000255" key="1">
    <source>
        <dbReference type="PROSITE-ProRule" id="PRU00448"/>
    </source>
</evidence>
<evidence type="ECO:0000269" key="2">
    <source>
    </source>
</evidence>
<evidence type="ECO:0000305" key="3"/>
<feature type="chain" id="PRO_0000073710" description="Troponin C, skeletal muscle">
    <location>
        <begin position="1"/>
        <end position="162"/>
    </location>
</feature>
<feature type="domain" description="EF-hand 1" evidence="1">
    <location>
        <begin position="17"/>
        <end position="52"/>
    </location>
</feature>
<feature type="domain" description="EF-hand 2" evidence="1">
    <location>
        <begin position="53"/>
        <end position="88"/>
    </location>
</feature>
<feature type="domain" description="EF-hand 3" evidence="1">
    <location>
        <begin position="93"/>
        <end position="128"/>
    </location>
</feature>
<feature type="domain" description="EF-hand 4" evidence="1">
    <location>
        <begin position="129"/>
        <end position="162"/>
    </location>
</feature>
<feature type="binding site" evidence="1">
    <location>
        <position position="30"/>
    </location>
    <ligand>
        <name>Ca(2+)</name>
        <dbReference type="ChEBI" id="CHEBI:29108"/>
        <label>1</label>
    </ligand>
</feature>
<feature type="binding site" evidence="1">
    <location>
        <position position="32"/>
    </location>
    <ligand>
        <name>Ca(2+)</name>
        <dbReference type="ChEBI" id="CHEBI:29108"/>
        <label>1</label>
    </ligand>
</feature>
<feature type="binding site" evidence="1">
    <location>
        <position position="36"/>
    </location>
    <ligand>
        <name>Ca(2+)</name>
        <dbReference type="ChEBI" id="CHEBI:29108"/>
        <label>1</label>
    </ligand>
</feature>
<feature type="binding site" evidence="1">
    <location>
        <position position="41"/>
    </location>
    <ligand>
        <name>Ca(2+)</name>
        <dbReference type="ChEBI" id="CHEBI:29108"/>
        <label>1</label>
    </ligand>
</feature>
<feature type="binding site" evidence="1">
    <location>
        <position position="66"/>
    </location>
    <ligand>
        <name>Ca(2+)</name>
        <dbReference type="ChEBI" id="CHEBI:29108"/>
        <label>2</label>
    </ligand>
</feature>
<feature type="binding site" evidence="1">
    <location>
        <position position="68"/>
    </location>
    <ligand>
        <name>Ca(2+)</name>
        <dbReference type="ChEBI" id="CHEBI:29108"/>
        <label>2</label>
    </ligand>
</feature>
<feature type="binding site" evidence="1">
    <location>
        <position position="70"/>
    </location>
    <ligand>
        <name>Ca(2+)</name>
        <dbReference type="ChEBI" id="CHEBI:29108"/>
        <label>2</label>
    </ligand>
</feature>
<feature type="binding site" evidence="1">
    <location>
        <position position="72"/>
    </location>
    <ligand>
        <name>Ca(2+)</name>
        <dbReference type="ChEBI" id="CHEBI:29108"/>
        <label>2</label>
    </ligand>
</feature>
<feature type="binding site" evidence="1">
    <location>
        <position position="77"/>
    </location>
    <ligand>
        <name>Ca(2+)</name>
        <dbReference type="ChEBI" id="CHEBI:29108"/>
        <label>2</label>
    </ligand>
</feature>
<feature type="binding site" evidence="1">
    <location>
        <position position="106"/>
    </location>
    <ligand>
        <name>Ca(2+)</name>
        <dbReference type="ChEBI" id="CHEBI:29108"/>
        <label>3</label>
    </ligand>
</feature>
<feature type="binding site" evidence="1">
    <location>
        <position position="108"/>
    </location>
    <ligand>
        <name>Ca(2+)</name>
        <dbReference type="ChEBI" id="CHEBI:29108"/>
        <label>3</label>
    </ligand>
</feature>
<feature type="binding site" evidence="1">
    <location>
        <position position="110"/>
    </location>
    <ligand>
        <name>Ca(2+)</name>
        <dbReference type="ChEBI" id="CHEBI:29108"/>
        <label>3</label>
    </ligand>
</feature>
<feature type="binding site" evidence="1">
    <location>
        <position position="112"/>
    </location>
    <ligand>
        <name>Ca(2+)</name>
        <dbReference type="ChEBI" id="CHEBI:29108"/>
        <label>3</label>
    </ligand>
</feature>
<feature type="binding site" evidence="1">
    <location>
        <position position="117"/>
    </location>
    <ligand>
        <name>Ca(2+)</name>
        <dbReference type="ChEBI" id="CHEBI:29108"/>
        <label>3</label>
    </ligand>
</feature>
<feature type="binding site" evidence="1">
    <location>
        <position position="142"/>
    </location>
    <ligand>
        <name>Ca(2+)</name>
        <dbReference type="ChEBI" id="CHEBI:29108"/>
        <label>4</label>
    </ligand>
</feature>
<feature type="binding site" evidence="1">
    <location>
        <position position="144"/>
    </location>
    <ligand>
        <name>Ca(2+)</name>
        <dbReference type="ChEBI" id="CHEBI:29108"/>
        <label>4</label>
    </ligand>
</feature>
<feature type="binding site" evidence="1">
    <location>
        <position position="146"/>
    </location>
    <ligand>
        <name>Ca(2+)</name>
        <dbReference type="ChEBI" id="CHEBI:29108"/>
        <label>4</label>
    </ligand>
</feature>
<feature type="binding site" evidence="1">
    <location>
        <position position="148"/>
    </location>
    <ligand>
        <name>Ca(2+)</name>
        <dbReference type="ChEBI" id="CHEBI:29108"/>
        <label>4</label>
    </ligand>
</feature>
<feature type="binding site" evidence="1">
    <location>
        <position position="153"/>
    </location>
    <ligand>
        <name>Ca(2+)</name>
        <dbReference type="ChEBI" id="CHEBI:29108"/>
        <label>4</label>
    </ligand>
</feature>
<feature type="modified residue" description="N-acetylalanine" evidence="2">
    <location>
        <position position="1"/>
    </location>
</feature>
<comment type="function">
    <text>Troponin is the central regulatory protein of striated muscle contraction. Tn consists of three components: Tn-I which is the inhibitor of actomyosin ATPase, Tn-T which contains the binding site for tropomyosin and Tn-C. The binding of calcium to Tn-C abolishes the inhibitory action of Tn on actin filaments.</text>
</comment>
<comment type="miscellaneous">
    <text>Skeletal muscle troponin C binds four calcium ions.</text>
</comment>
<comment type="similarity">
    <text evidence="3">Belongs to the troponin C family.</text>
</comment>
<organism>
    <name type="scientific">Pelophylax lessonae</name>
    <name type="common">Pool frog</name>
    <name type="synonym">Rana lessonae</name>
    <dbReference type="NCBI Taxonomy" id="45623"/>
    <lineage>
        <taxon>Eukaryota</taxon>
        <taxon>Metazoa</taxon>
        <taxon>Chordata</taxon>
        <taxon>Craniata</taxon>
        <taxon>Vertebrata</taxon>
        <taxon>Euteleostomi</taxon>
        <taxon>Amphibia</taxon>
        <taxon>Batrachia</taxon>
        <taxon>Anura</taxon>
        <taxon>Neobatrachia</taxon>
        <taxon>Ranoidea</taxon>
        <taxon>Ranidae</taxon>
        <taxon>Pelophylax</taxon>
    </lineage>
</organism>
<proteinExistence type="evidence at protein level"/>